<organism>
    <name type="scientific">Listeria monocytogenes serotype 4b (strain F2365)</name>
    <dbReference type="NCBI Taxonomy" id="265669"/>
    <lineage>
        <taxon>Bacteria</taxon>
        <taxon>Bacillati</taxon>
        <taxon>Bacillota</taxon>
        <taxon>Bacilli</taxon>
        <taxon>Bacillales</taxon>
        <taxon>Listeriaceae</taxon>
        <taxon>Listeria</taxon>
    </lineage>
</organism>
<gene>
    <name evidence="1" type="primary">obg</name>
    <name type="ordered locus">LMOf2365_1556</name>
</gene>
<accession>Q71ZD3</accession>
<proteinExistence type="inferred from homology"/>
<feature type="chain" id="PRO_0000386025" description="GTPase Obg">
    <location>
        <begin position="1"/>
        <end position="429"/>
    </location>
</feature>
<feature type="domain" description="Obg" evidence="3">
    <location>
        <begin position="1"/>
        <end position="158"/>
    </location>
</feature>
<feature type="domain" description="OBG-type G" evidence="1">
    <location>
        <begin position="159"/>
        <end position="329"/>
    </location>
</feature>
<feature type="domain" description="OCT" evidence="2">
    <location>
        <begin position="351"/>
        <end position="429"/>
    </location>
</feature>
<feature type="region of interest" description="Disordered" evidence="4">
    <location>
        <begin position="124"/>
        <end position="145"/>
    </location>
</feature>
<feature type="binding site" evidence="1">
    <location>
        <begin position="165"/>
        <end position="172"/>
    </location>
    <ligand>
        <name>GTP</name>
        <dbReference type="ChEBI" id="CHEBI:37565"/>
    </ligand>
</feature>
<feature type="binding site" evidence="1">
    <location>
        <position position="172"/>
    </location>
    <ligand>
        <name>Mg(2+)</name>
        <dbReference type="ChEBI" id="CHEBI:18420"/>
    </ligand>
</feature>
<feature type="binding site" evidence="1">
    <location>
        <begin position="190"/>
        <end position="194"/>
    </location>
    <ligand>
        <name>GTP</name>
        <dbReference type="ChEBI" id="CHEBI:37565"/>
    </ligand>
</feature>
<feature type="binding site" evidence="1">
    <location>
        <position position="192"/>
    </location>
    <ligand>
        <name>Mg(2+)</name>
        <dbReference type="ChEBI" id="CHEBI:18420"/>
    </ligand>
</feature>
<feature type="binding site" evidence="1">
    <location>
        <begin position="212"/>
        <end position="215"/>
    </location>
    <ligand>
        <name>GTP</name>
        <dbReference type="ChEBI" id="CHEBI:37565"/>
    </ligand>
</feature>
<feature type="binding site" evidence="1">
    <location>
        <begin position="282"/>
        <end position="285"/>
    </location>
    <ligand>
        <name>GTP</name>
        <dbReference type="ChEBI" id="CHEBI:37565"/>
    </ligand>
</feature>
<feature type="binding site" evidence="1">
    <location>
        <begin position="310"/>
        <end position="312"/>
    </location>
    <ligand>
        <name>GTP</name>
        <dbReference type="ChEBI" id="CHEBI:37565"/>
    </ligand>
</feature>
<name>OBG_LISMF</name>
<keyword id="KW-0963">Cytoplasm</keyword>
<keyword id="KW-0342">GTP-binding</keyword>
<keyword id="KW-0378">Hydrolase</keyword>
<keyword id="KW-0460">Magnesium</keyword>
<keyword id="KW-0479">Metal-binding</keyword>
<keyword id="KW-0547">Nucleotide-binding</keyword>
<protein>
    <recommendedName>
        <fullName evidence="1">GTPase Obg</fullName>
        <ecNumber evidence="1">3.6.5.-</ecNumber>
    </recommendedName>
    <alternativeName>
        <fullName evidence="1">GTP-binding protein Obg</fullName>
    </alternativeName>
</protein>
<evidence type="ECO:0000255" key="1">
    <source>
        <dbReference type="HAMAP-Rule" id="MF_01454"/>
    </source>
</evidence>
<evidence type="ECO:0000255" key="2">
    <source>
        <dbReference type="PROSITE-ProRule" id="PRU01229"/>
    </source>
</evidence>
<evidence type="ECO:0000255" key="3">
    <source>
        <dbReference type="PROSITE-ProRule" id="PRU01231"/>
    </source>
</evidence>
<evidence type="ECO:0000256" key="4">
    <source>
        <dbReference type="SAM" id="MobiDB-lite"/>
    </source>
</evidence>
<sequence length="429" mass="47119">MFVDQVKIYVKAGNGGDGMVAFRREKFVPNGGPAGGDGGKGADVVFVVDEGLRTLVDFRFKRIFKAEHGEHGMSKSMHGRGAEDLVVKVPQGTIVKDIDTGEIIADLVAHGQRAVIAKAGRGGRGNKRFATPANPAPELSENGEPGQERNVQLELKVLADVGLVGFPSVGKSTLLSVVSAARPKIAAYHFTTIVPNLGMVDAGDGRSFVMADLPGLIEGASQGVGLGHQFLRHIERTRVIVHVIDMSGSEGRVPYEDYMAINNELEQYNLRLMERPQIIVANKMDMPDAEENLNEFKTKIAEDIPVFPISAVTKTGLRELLLAIADKLETTPEFPLNEILEQEDEDTVLYKYVAEEPDFEISREPDGTFVLSGAKIERLFTMTNFERDASISRFARQLRAMGVDEALRKRGAKDGDIVRLLDYEFEFMD</sequence>
<comment type="function">
    <text evidence="1">An essential GTPase which binds GTP, GDP and possibly (p)ppGpp with moderate affinity, with high nucleotide exchange rates and a fairly low GTP hydrolysis rate. Plays a role in control of the cell cycle, stress response, ribosome biogenesis and in those bacteria that undergo differentiation, in morphogenesis control.</text>
</comment>
<comment type="cofactor">
    <cofactor evidence="1">
        <name>Mg(2+)</name>
        <dbReference type="ChEBI" id="CHEBI:18420"/>
    </cofactor>
</comment>
<comment type="subunit">
    <text evidence="1">Monomer.</text>
</comment>
<comment type="subcellular location">
    <subcellularLocation>
        <location evidence="1">Cytoplasm</location>
    </subcellularLocation>
</comment>
<comment type="similarity">
    <text evidence="1">Belongs to the TRAFAC class OBG-HflX-like GTPase superfamily. OBG GTPase family.</text>
</comment>
<dbReference type="EC" id="3.6.5.-" evidence="1"/>
<dbReference type="EMBL" id="AE017262">
    <property type="protein sequence ID" value="AAT04331.1"/>
    <property type="molecule type" value="Genomic_DNA"/>
</dbReference>
<dbReference type="SMR" id="Q71ZD3"/>
<dbReference type="KEGG" id="lmf:LMOf2365_1556"/>
<dbReference type="HOGENOM" id="CLU_011747_2_1_9"/>
<dbReference type="GO" id="GO:0005737">
    <property type="term" value="C:cytoplasm"/>
    <property type="evidence" value="ECO:0007669"/>
    <property type="project" value="UniProtKB-SubCell"/>
</dbReference>
<dbReference type="GO" id="GO:0005525">
    <property type="term" value="F:GTP binding"/>
    <property type="evidence" value="ECO:0007669"/>
    <property type="project" value="UniProtKB-UniRule"/>
</dbReference>
<dbReference type="GO" id="GO:0003924">
    <property type="term" value="F:GTPase activity"/>
    <property type="evidence" value="ECO:0007669"/>
    <property type="project" value="UniProtKB-UniRule"/>
</dbReference>
<dbReference type="GO" id="GO:0000287">
    <property type="term" value="F:magnesium ion binding"/>
    <property type="evidence" value="ECO:0007669"/>
    <property type="project" value="InterPro"/>
</dbReference>
<dbReference type="GO" id="GO:0042254">
    <property type="term" value="P:ribosome biogenesis"/>
    <property type="evidence" value="ECO:0007669"/>
    <property type="project" value="UniProtKB-UniRule"/>
</dbReference>
<dbReference type="CDD" id="cd01898">
    <property type="entry name" value="Obg"/>
    <property type="match status" value="1"/>
</dbReference>
<dbReference type="FunFam" id="2.70.210.12:FF:000001">
    <property type="entry name" value="GTPase Obg"/>
    <property type="match status" value="1"/>
</dbReference>
<dbReference type="FunFam" id="3.40.50.300:FF:000515">
    <property type="entry name" value="GTPase Obg"/>
    <property type="match status" value="1"/>
</dbReference>
<dbReference type="Gene3D" id="3.30.300.350">
    <property type="entry name" value="GTP-binding protein OBG, C-terminal domain"/>
    <property type="match status" value="1"/>
</dbReference>
<dbReference type="Gene3D" id="2.70.210.12">
    <property type="entry name" value="GTP1/OBG domain"/>
    <property type="match status" value="1"/>
</dbReference>
<dbReference type="Gene3D" id="3.40.50.300">
    <property type="entry name" value="P-loop containing nucleotide triphosphate hydrolases"/>
    <property type="match status" value="1"/>
</dbReference>
<dbReference type="HAMAP" id="MF_01454">
    <property type="entry name" value="GTPase_Obg"/>
    <property type="match status" value="1"/>
</dbReference>
<dbReference type="InterPro" id="IPR031167">
    <property type="entry name" value="G_OBG"/>
</dbReference>
<dbReference type="InterPro" id="IPR006073">
    <property type="entry name" value="GTP-bd"/>
</dbReference>
<dbReference type="InterPro" id="IPR014100">
    <property type="entry name" value="GTP-bd_Obg/CgtA"/>
</dbReference>
<dbReference type="InterPro" id="IPR036346">
    <property type="entry name" value="GTP-bd_prot_GTP1/OBG_C_sf"/>
</dbReference>
<dbReference type="InterPro" id="IPR006074">
    <property type="entry name" value="GTP1-OBG_CS"/>
</dbReference>
<dbReference type="InterPro" id="IPR006169">
    <property type="entry name" value="GTP1_OBG_dom"/>
</dbReference>
<dbReference type="InterPro" id="IPR036726">
    <property type="entry name" value="GTP1_OBG_dom_sf"/>
</dbReference>
<dbReference type="InterPro" id="IPR045086">
    <property type="entry name" value="OBG_GTPase"/>
</dbReference>
<dbReference type="InterPro" id="IPR015349">
    <property type="entry name" value="OCT_dom"/>
</dbReference>
<dbReference type="InterPro" id="IPR027417">
    <property type="entry name" value="P-loop_NTPase"/>
</dbReference>
<dbReference type="InterPro" id="IPR005225">
    <property type="entry name" value="Small_GTP-bd"/>
</dbReference>
<dbReference type="NCBIfam" id="TIGR02729">
    <property type="entry name" value="Obg_CgtA"/>
    <property type="match status" value="1"/>
</dbReference>
<dbReference type="NCBIfam" id="TIGR03595">
    <property type="entry name" value="Obg_CgtA_exten"/>
    <property type="match status" value="1"/>
</dbReference>
<dbReference type="NCBIfam" id="NF008954">
    <property type="entry name" value="PRK12296.1"/>
    <property type="match status" value="1"/>
</dbReference>
<dbReference type="NCBIfam" id="NF008955">
    <property type="entry name" value="PRK12297.1"/>
    <property type="match status" value="1"/>
</dbReference>
<dbReference type="NCBIfam" id="NF008956">
    <property type="entry name" value="PRK12299.1"/>
    <property type="match status" value="1"/>
</dbReference>
<dbReference type="NCBIfam" id="TIGR00231">
    <property type="entry name" value="small_GTP"/>
    <property type="match status" value="1"/>
</dbReference>
<dbReference type="PANTHER" id="PTHR11702">
    <property type="entry name" value="DEVELOPMENTALLY REGULATED GTP-BINDING PROTEIN-RELATED"/>
    <property type="match status" value="1"/>
</dbReference>
<dbReference type="PANTHER" id="PTHR11702:SF31">
    <property type="entry name" value="MITOCHONDRIAL RIBOSOME-ASSOCIATED GTPASE 2"/>
    <property type="match status" value="1"/>
</dbReference>
<dbReference type="Pfam" id="PF09269">
    <property type="entry name" value="DUF1967"/>
    <property type="match status" value="1"/>
</dbReference>
<dbReference type="Pfam" id="PF01018">
    <property type="entry name" value="GTP1_OBG"/>
    <property type="match status" value="1"/>
</dbReference>
<dbReference type="Pfam" id="PF01926">
    <property type="entry name" value="MMR_HSR1"/>
    <property type="match status" value="1"/>
</dbReference>
<dbReference type="PIRSF" id="PIRSF002401">
    <property type="entry name" value="GTP_bd_Obg/CgtA"/>
    <property type="match status" value="1"/>
</dbReference>
<dbReference type="PRINTS" id="PR00326">
    <property type="entry name" value="GTP1OBG"/>
</dbReference>
<dbReference type="SUPFAM" id="SSF102741">
    <property type="entry name" value="Obg GTP-binding protein C-terminal domain"/>
    <property type="match status" value="1"/>
</dbReference>
<dbReference type="SUPFAM" id="SSF82051">
    <property type="entry name" value="Obg GTP-binding protein N-terminal domain"/>
    <property type="match status" value="1"/>
</dbReference>
<dbReference type="SUPFAM" id="SSF52540">
    <property type="entry name" value="P-loop containing nucleoside triphosphate hydrolases"/>
    <property type="match status" value="1"/>
</dbReference>
<dbReference type="PROSITE" id="PS51710">
    <property type="entry name" value="G_OBG"/>
    <property type="match status" value="1"/>
</dbReference>
<dbReference type="PROSITE" id="PS00905">
    <property type="entry name" value="GTP1_OBG"/>
    <property type="match status" value="1"/>
</dbReference>
<dbReference type="PROSITE" id="PS51883">
    <property type="entry name" value="OBG"/>
    <property type="match status" value="1"/>
</dbReference>
<dbReference type="PROSITE" id="PS51881">
    <property type="entry name" value="OCT"/>
    <property type="match status" value="1"/>
</dbReference>
<reference key="1">
    <citation type="journal article" date="2004" name="Nucleic Acids Res.">
        <title>Whole genome comparisons of serotype 4b and 1/2a strains of the food-borne pathogen Listeria monocytogenes reveal new insights into the core genome components of this species.</title>
        <authorList>
            <person name="Nelson K.E."/>
            <person name="Fouts D.E."/>
            <person name="Mongodin E.F."/>
            <person name="Ravel J."/>
            <person name="DeBoy R.T."/>
            <person name="Kolonay J.F."/>
            <person name="Rasko D.A."/>
            <person name="Angiuoli S.V."/>
            <person name="Gill S.R."/>
            <person name="Paulsen I.T."/>
            <person name="Peterson J.D."/>
            <person name="White O."/>
            <person name="Nelson W.C."/>
            <person name="Nierman W.C."/>
            <person name="Beanan M.J."/>
            <person name="Brinkac L.M."/>
            <person name="Daugherty S.C."/>
            <person name="Dodson R.J."/>
            <person name="Durkin A.S."/>
            <person name="Madupu R."/>
            <person name="Haft D.H."/>
            <person name="Selengut J."/>
            <person name="Van Aken S.E."/>
            <person name="Khouri H.M."/>
            <person name="Fedorova N."/>
            <person name="Forberger H.A."/>
            <person name="Tran B."/>
            <person name="Kathariou S."/>
            <person name="Wonderling L.D."/>
            <person name="Uhlich G.A."/>
            <person name="Bayles D.O."/>
            <person name="Luchansky J.B."/>
            <person name="Fraser C.M."/>
        </authorList>
    </citation>
    <scope>NUCLEOTIDE SEQUENCE [LARGE SCALE GENOMIC DNA]</scope>
    <source>
        <strain>F2365</strain>
    </source>
</reference>